<reference key="1">
    <citation type="journal article" date="2002" name="Nucleic Acids Res.">
        <title>Genome sequence of Shigella flexneri 2a: insights into pathogenicity through comparison with genomes of Escherichia coli K12 and O157.</title>
        <authorList>
            <person name="Jin Q."/>
            <person name="Yuan Z."/>
            <person name="Xu J."/>
            <person name="Wang Y."/>
            <person name="Shen Y."/>
            <person name="Lu W."/>
            <person name="Wang J."/>
            <person name="Liu H."/>
            <person name="Yang J."/>
            <person name="Yang F."/>
            <person name="Zhang X."/>
            <person name="Zhang J."/>
            <person name="Yang G."/>
            <person name="Wu H."/>
            <person name="Qu D."/>
            <person name="Dong J."/>
            <person name="Sun L."/>
            <person name="Xue Y."/>
            <person name="Zhao A."/>
            <person name="Gao Y."/>
            <person name="Zhu J."/>
            <person name="Kan B."/>
            <person name="Ding K."/>
            <person name="Chen S."/>
            <person name="Cheng H."/>
            <person name="Yao Z."/>
            <person name="He B."/>
            <person name="Chen R."/>
            <person name="Ma D."/>
            <person name="Qiang B."/>
            <person name="Wen Y."/>
            <person name="Hou Y."/>
            <person name="Yu J."/>
        </authorList>
    </citation>
    <scope>NUCLEOTIDE SEQUENCE [LARGE SCALE GENOMIC DNA]</scope>
    <source>
        <strain>301 / Serotype 2a</strain>
    </source>
</reference>
<reference key="2">
    <citation type="journal article" date="2003" name="Infect. Immun.">
        <title>Complete genome sequence and comparative genomics of Shigella flexneri serotype 2a strain 2457T.</title>
        <authorList>
            <person name="Wei J."/>
            <person name="Goldberg M.B."/>
            <person name="Burland V."/>
            <person name="Venkatesan M.M."/>
            <person name="Deng W."/>
            <person name="Fournier G."/>
            <person name="Mayhew G.F."/>
            <person name="Plunkett G. III"/>
            <person name="Rose D.J."/>
            <person name="Darling A."/>
            <person name="Mau B."/>
            <person name="Perna N.T."/>
            <person name="Payne S.M."/>
            <person name="Runyen-Janecky L.J."/>
            <person name="Zhou S."/>
            <person name="Schwartz D.C."/>
            <person name="Blattner F.R."/>
        </authorList>
    </citation>
    <scope>NUCLEOTIDE SEQUENCE [LARGE SCALE GENOMIC DNA]</scope>
    <source>
        <strain>ATCC 700930 / 2457T / Serotype 2a</strain>
    </source>
</reference>
<feature type="chain" id="PRO_0000337866" description="Anti-adapter protein IraP">
    <location>
        <begin position="1"/>
        <end position="86"/>
    </location>
</feature>
<feature type="coiled-coil region" evidence="1">
    <location>
        <begin position="1"/>
        <end position="36"/>
    </location>
</feature>
<accession>Q83MA8</accession>
<accession>Q7C342</accession>
<name>IRAP_SHIFL</name>
<organism>
    <name type="scientific">Shigella flexneri</name>
    <dbReference type="NCBI Taxonomy" id="623"/>
    <lineage>
        <taxon>Bacteria</taxon>
        <taxon>Pseudomonadati</taxon>
        <taxon>Pseudomonadota</taxon>
        <taxon>Gammaproteobacteria</taxon>
        <taxon>Enterobacterales</taxon>
        <taxon>Enterobacteriaceae</taxon>
        <taxon>Shigella</taxon>
    </lineage>
</organism>
<evidence type="ECO:0000255" key="1">
    <source>
        <dbReference type="HAMAP-Rule" id="MF_01198"/>
    </source>
</evidence>
<keyword id="KW-0175">Coiled coil</keyword>
<keyword id="KW-0963">Cytoplasm</keyword>
<keyword id="KW-1185">Reference proteome</keyword>
<keyword id="KW-0346">Stress response</keyword>
<protein>
    <recommendedName>
        <fullName evidence="1">Anti-adapter protein IraP</fullName>
    </recommendedName>
</protein>
<dbReference type="EMBL" id="AE005674">
    <property type="protein sequence ID" value="AAN41893.1"/>
    <property type="molecule type" value="Genomic_DNA"/>
</dbReference>
<dbReference type="EMBL" id="AE014073">
    <property type="protein sequence ID" value="AAP15781.1"/>
    <property type="molecule type" value="Genomic_DNA"/>
</dbReference>
<dbReference type="RefSeq" id="WP_000792969.1">
    <property type="nucleotide sequence ID" value="NZ_WPGW01000278.1"/>
</dbReference>
<dbReference type="SMR" id="Q83MA8"/>
<dbReference type="STRING" id="198214.SF0231"/>
<dbReference type="PaxDb" id="198214-SF0231"/>
<dbReference type="KEGG" id="sfl:SF0231"/>
<dbReference type="KEGG" id="sfx:S0253"/>
<dbReference type="PATRIC" id="fig|198214.7.peg.261"/>
<dbReference type="HOGENOM" id="CLU_169517_0_0_6"/>
<dbReference type="Proteomes" id="UP000001006">
    <property type="component" value="Chromosome"/>
</dbReference>
<dbReference type="Proteomes" id="UP000002673">
    <property type="component" value="Chromosome"/>
</dbReference>
<dbReference type="GO" id="GO:0005737">
    <property type="term" value="C:cytoplasm"/>
    <property type="evidence" value="ECO:0007669"/>
    <property type="project" value="UniProtKB-SubCell"/>
</dbReference>
<dbReference type="GO" id="GO:0009267">
    <property type="term" value="P:cellular response to starvation"/>
    <property type="evidence" value="ECO:0007669"/>
    <property type="project" value="UniProtKB-UniRule"/>
</dbReference>
<dbReference type="HAMAP" id="MF_01198">
    <property type="entry name" value="Anti_adapt_IraP"/>
    <property type="match status" value="1"/>
</dbReference>
<dbReference type="InterPro" id="IPR019732">
    <property type="entry name" value="SigmaS_Anti-adapt_IraP"/>
</dbReference>
<dbReference type="NCBIfam" id="NF007598">
    <property type="entry name" value="PRK10244.1"/>
    <property type="match status" value="1"/>
</dbReference>
<dbReference type="Pfam" id="PF10796">
    <property type="entry name" value="Anti-adapt_IraP"/>
    <property type="match status" value="1"/>
</dbReference>
<sequence length="86" mass="9884">MKNLIAELLFKLAQKEEESKELCAQVEALEIIVTAMLRNMAQNDQQRLIDQVEGALYEVKPDASIPDDDTELLRDYVKKLLKHPCQ</sequence>
<comment type="function">
    <text evidence="1">Inhibits RpoS proteolysis by regulating RssB activity, thereby increasing the stability of the sigma stress factor RpoS especially during phosphate starvation, but also in stationary phase and during nitrogen starvation. Its effect on RpoS stability is due to its interaction with RssB, which probably blocks the interaction of RssB with RpoS, and the consequent delivery of the RssB-RpoS complex to the ClpXP protein degradation pathway.</text>
</comment>
<comment type="subunit">
    <text evidence="1">Interacts with RssB.</text>
</comment>
<comment type="subcellular location">
    <subcellularLocation>
        <location evidence="1">Cytoplasm</location>
    </subcellularLocation>
</comment>
<comment type="similarity">
    <text evidence="1">Belongs to the IraP family.</text>
</comment>
<proteinExistence type="inferred from homology"/>
<gene>
    <name evidence="1" type="primary">iraP</name>
    <name type="ordered locus">SF0231</name>
    <name type="ordered locus">S0253</name>
</gene>